<evidence type="ECO:0000255" key="1">
    <source>
        <dbReference type="HAMAP-Rule" id="MF_00051"/>
    </source>
</evidence>
<comment type="function">
    <text evidence="1">Catalyzes the reversible interconversion of serine and glycine with a modified folate serving as the one-carbon carrier. Also exhibits a pteridine-independent aldolase activity toward beta-hydroxyamino acids, producing glycine and aldehydes, via a retro-aldol mechanism.</text>
</comment>
<comment type="cofactor">
    <cofactor evidence="1">
        <name>pyridoxal 5'-phosphate</name>
        <dbReference type="ChEBI" id="CHEBI:597326"/>
    </cofactor>
</comment>
<comment type="pathway">
    <text evidence="1">Amino-acid biosynthesis; glycine biosynthesis; glycine from L-serine: step 1/1.</text>
</comment>
<comment type="subunit">
    <text evidence="1">Homodimer.</text>
</comment>
<comment type="subcellular location">
    <subcellularLocation>
        <location evidence="1">Cytoplasm</location>
    </subcellularLocation>
</comment>
<comment type="similarity">
    <text evidence="1">Belongs to the SHMT family.</text>
</comment>
<reference key="1">
    <citation type="journal article" date="2009" name="Proc. Natl. Acad. Sci. U.S.A.">
        <title>Biogeography of the Sulfolobus islandicus pan-genome.</title>
        <authorList>
            <person name="Reno M.L."/>
            <person name="Held N.L."/>
            <person name="Fields C.J."/>
            <person name="Burke P.V."/>
            <person name="Whitaker R.J."/>
        </authorList>
    </citation>
    <scope>NUCLEOTIDE SEQUENCE [LARGE SCALE GENOMIC DNA]</scope>
    <source>
        <strain>M.16.27</strain>
    </source>
</reference>
<sequence length="433" mass="48458">MSFPKELEKVLEITKAQNVWRRTQTLNLIASENVMSPLAESVYMSDFMSRYAEGKPYKRYYQGTKYTDEIETLAMDLMNEITNSKDCDLRPTSGTIANAAVFRVLAEPGDKALIAPVQAGAHVSHTKFGTLGALGIQHIEMPFDEENINVDVDKAIKMIEEVKPKFVVLGGSLYLFPHPTKELAPHVHAVGAKLVYDAAHVYGLIEGKVWSSPLKEGADIMTVSTHKTFPGPQGGAIFSDGSEVFKQVSRTIFPWFVSNHHLHRLPATAVTAIEMKYFGESYANQITRNSKALAEALAERGFKVIGENLGYTKSHQVAVDVRQFGGGNKIAKLLEDANIIVNKNLLPYDKPENVSDPSGLRIGVQEMTRYGMKESEMEEIAELFKKVIIDKKDVNEVKKEVIDMRKNFLEVKYTFDDMKDLEKYSSKSLKLII</sequence>
<protein>
    <recommendedName>
        <fullName evidence="1">Serine hydroxymethyltransferase</fullName>
        <shortName evidence="1">SHMT</shortName>
        <shortName evidence="1">Serine methylase</shortName>
        <ecNumber evidence="1">2.1.2.-</ecNumber>
    </recommendedName>
</protein>
<feature type="chain" id="PRO_1000202271" description="Serine hydroxymethyltransferase">
    <location>
        <begin position="1"/>
        <end position="433"/>
    </location>
</feature>
<feature type="binding site" evidence="1">
    <location>
        <begin position="121"/>
        <end position="123"/>
    </location>
    <ligand>
        <name>(6S)-5,6,7,8-tetrahydrofolate</name>
        <dbReference type="ChEBI" id="CHEBI:57453"/>
    </ligand>
</feature>
<feature type="binding site" evidence="1">
    <location>
        <position position="243"/>
    </location>
    <ligand>
        <name>(6S)-5,6,7,8-tetrahydrofolate</name>
        <dbReference type="ChEBI" id="CHEBI:57453"/>
    </ligand>
</feature>
<feature type="site" description="Plays an important role in substrate specificity" evidence="1">
    <location>
        <position position="226"/>
    </location>
</feature>
<feature type="modified residue" description="N6-(pyridoxal phosphate)lysine" evidence="1">
    <location>
        <position position="227"/>
    </location>
</feature>
<organism>
    <name type="scientific">Saccharolobus islandicus (strain M.16.27)</name>
    <name type="common">Sulfolobus islandicus</name>
    <dbReference type="NCBI Taxonomy" id="427318"/>
    <lineage>
        <taxon>Archaea</taxon>
        <taxon>Thermoproteota</taxon>
        <taxon>Thermoprotei</taxon>
        <taxon>Sulfolobales</taxon>
        <taxon>Sulfolobaceae</taxon>
        <taxon>Saccharolobus</taxon>
    </lineage>
</organism>
<keyword id="KW-0028">Amino-acid biosynthesis</keyword>
<keyword id="KW-0963">Cytoplasm</keyword>
<keyword id="KW-0554">One-carbon metabolism</keyword>
<keyword id="KW-0663">Pyridoxal phosphate</keyword>
<keyword id="KW-0808">Transferase</keyword>
<name>GLYA_SACI3</name>
<dbReference type="EC" id="2.1.2.-" evidence="1"/>
<dbReference type="EMBL" id="CP001401">
    <property type="protein sequence ID" value="ACP55577.1"/>
    <property type="molecule type" value="Genomic_DNA"/>
</dbReference>
<dbReference type="RefSeq" id="WP_012717389.1">
    <property type="nucleotide sequence ID" value="NC_012632.1"/>
</dbReference>
<dbReference type="SMR" id="C3N6F2"/>
<dbReference type="GeneID" id="84058988"/>
<dbReference type="KEGG" id="sim:M1627_1699"/>
<dbReference type="HOGENOM" id="CLU_022477_2_1_2"/>
<dbReference type="UniPathway" id="UPA00288">
    <property type="reaction ID" value="UER01023"/>
</dbReference>
<dbReference type="Proteomes" id="UP000002307">
    <property type="component" value="Chromosome"/>
</dbReference>
<dbReference type="GO" id="GO:0005737">
    <property type="term" value="C:cytoplasm"/>
    <property type="evidence" value="ECO:0007669"/>
    <property type="project" value="UniProtKB-SubCell"/>
</dbReference>
<dbReference type="GO" id="GO:0004372">
    <property type="term" value="F:glycine hydroxymethyltransferase activity"/>
    <property type="evidence" value="ECO:0007669"/>
    <property type="project" value="UniProtKB-UniRule"/>
</dbReference>
<dbReference type="GO" id="GO:0030170">
    <property type="term" value="F:pyridoxal phosphate binding"/>
    <property type="evidence" value="ECO:0007669"/>
    <property type="project" value="UniProtKB-UniRule"/>
</dbReference>
<dbReference type="GO" id="GO:0019264">
    <property type="term" value="P:glycine biosynthetic process from serine"/>
    <property type="evidence" value="ECO:0007669"/>
    <property type="project" value="UniProtKB-UniRule"/>
</dbReference>
<dbReference type="GO" id="GO:0035999">
    <property type="term" value="P:tetrahydrofolate interconversion"/>
    <property type="evidence" value="ECO:0007669"/>
    <property type="project" value="InterPro"/>
</dbReference>
<dbReference type="CDD" id="cd00378">
    <property type="entry name" value="SHMT"/>
    <property type="match status" value="1"/>
</dbReference>
<dbReference type="FunFam" id="3.40.640.10:FF:000101">
    <property type="entry name" value="Serine hydroxymethyltransferase"/>
    <property type="match status" value="1"/>
</dbReference>
<dbReference type="FunFam" id="3.90.1150.10:FF:000136">
    <property type="entry name" value="Serine hydroxymethyltransferase"/>
    <property type="match status" value="1"/>
</dbReference>
<dbReference type="Gene3D" id="3.90.1150.10">
    <property type="entry name" value="Aspartate Aminotransferase, domain 1"/>
    <property type="match status" value="1"/>
</dbReference>
<dbReference type="Gene3D" id="3.40.640.10">
    <property type="entry name" value="Type I PLP-dependent aspartate aminotransferase-like (Major domain)"/>
    <property type="match status" value="1"/>
</dbReference>
<dbReference type="HAMAP" id="MF_00051">
    <property type="entry name" value="SHMT"/>
    <property type="match status" value="1"/>
</dbReference>
<dbReference type="InterPro" id="IPR015424">
    <property type="entry name" value="PyrdxlP-dep_Trfase"/>
</dbReference>
<dbReference type="InterPro" id="IPR015421">
    <property type="entry name" value="PyrdxlP-dep_Trfase_major"/>
</dbReference>
<dbReference type="InterPro" id="IPR015422">
    <property type="entry name" value="PyrdxlP-dep_Trfase_small"/>
</dbReference>
<dbReference type="InterPro" id="IPR001085">
    <property type="entry name" value="Ser_HO-MeTrfase"/>
</dbReference>
<dbReference type="InterPro" id="IPR049943">
    <property type="entry name" value="Ser_HO-MeTrfase-like"/>
</dbReference>
<dbReference type="InterPro" id="IPR019798">
    <property type="entry name" value="Ser_HO-MeTrfase_PLP_BS"/>
</dbReference>
<dbReference type="InterPro" id="IPR039429">
    <property type="entry name" value="SHMT-like_dom"/>
</dbReference>
<dbReference type="NCBIfam" id="NF000586">
    <property type="entry name" value="PRK00011.1"/>
    <property type="match status" value="1"/>
</dbReference>
<dbReference type="PANTHER" id="PTHR11680">
    <property type="entry name" value="SERINE HYDROXYMETHYLTRANSFERASE"/>
    <property type="match status" value="1"/>
</dbReference>
<dbReference type="PANTHER" id="PTHR11680:SF35">
    <property type="entry name" value="SERINE HYDROXYMETHYLTRANSFERASE 1"/>
    <property type="match status" value="1"/>
</dbReference>
<dbReference type="Pfam" id="PF00464">
    <property type="entry name" value="SHMT"/>
    <property type="match status" value="1"/>
</dbReference>
<dbReference type="PIRSF" id="PIRSF000412">
    <property type="entry name" value="SHMT"/>
    <property type="match status" value="1"/>
</dbReference>
<dbReference type="SUPFAM" id="SSF53383">
    <property type="entry name" value="PLP-dependent transferases"/>
    <property type="match status" value="1"/>
</dbReference>
<dbReference type="PROSITE" id="PS00096">
    <property type="entry name" value="SHMT"/>
    <property type="match status" value="1"/>
</dbReference>
<accession>C3N6F2</accession>
<proteinExistence type="inferred from homology"/>
<gene>
    <name evidence="1" type="primary">glyA</name>
    <name type="ordered locus">M1627_1699</name>
</gene>